<dbReference type="EMBL" id="CP001113">
    <property type="protein sequence ID" value="ACF63531.1"/>
    <property type="molecule type" value="Genomic_DNA"/>
</dbReference>
<dbReference type="RefSeq" id="WP_000517480.1">
    <property type="nucleotide sequence ID" value="NZ_CCMR01000001.1"/>
</dbReference>
<dbReference type="SMR" id="B4T458"/>
<dbReference type="KEGG" id="see:SNSL254_A3137"/>
<dbReference type="HOGENOM" id="CLU_134863_5_2_6"/>
<dbReference type="Proteomes" id="UP000008824">
    <property type="component" value="Chromosome"/>
</dbReference>
<dbReference type="GO" id="GO:0032153">
    <property type="term" value="C:cell division site"/>
    <property type="evidence" value="ECO:0007669"/>
    <property type="project" value="UniProtKB-UniRule"/>
</dbReference>
<dbReference type="GO" id="GO:0030428">
    <property type="term" value="C:cell septum"/>
    <property type="evidence" value="ECO:0007669"/>
    <property type="project" value="TreeGrafter"/>
</dbReference>
<dbReference type="GO" id="GO:0005886">
    <property type="term" value="C:plasma membrane"/>
    <property type="evidence" value="ECO:0007669"/>
    <property type="project" value="UniProtKB-SubCell"/>
</dbReference>
<dbReference type="GO" id="GO:0043093">
    <property type="term" value="P:FtsZ-dependent cytokinesis"/>
    <property type="evidence" value="ECO:0007669"/>
    <property type="project" value="UniProtKB-UniRule"/>
</dbReference>
<dbReference type="FunFam" id="1.20.5.400:FF:000001">
    <property type="entry name" value="Cell division protein FtsB"/>
    <property type="match status" value="1"/>
</dbReference>
<dbReference type="Gene3D" id="1.20.5.400">
    <property type="match status" value="1"/>
</dbReference>
<dbReference type="HAMAP" id="MF_00599">
    <property type="entry name" value="FtsB"/>
    <property type="match status" value="1"/>
</dbReference>
<dbReference type="InterPro" id="IPR023081">
    <property type="entry name" value="Cell_div_FtsB"/>
</dbReference>
<dbReference type="InterPro" id="IPR007060">
    <property type="entry name" value="FtsL/DivIC"/>
</dbReference>
<dbReference type="NCBIfam" id="NF002058">
    <property type="entry name" value="PRK00888.1"/>
    <property type="match status" value="1"/>
</dbReference>
<dbReference type="PANTHER" id="PTHR37485">
    <property type="entry name" value="CELL DIVISION PROTEIN FTSB"/>
    <property type="match status" value="1"/>
</dbReference>
<dbReference type="PANTHER" id="PTHR37485:SF1">
    <property type="entry name" value="CELL DIVISION PROTEIN FTSB"/>
    <property type="match status" value="1"/>
</dbReference>
<dbReference type="Pfam" id="PF04977">
    <property type="entry name" value="DivIC"/>
    <property type="match status" value="1"/>
</dbReference>
<reference key="1">
    <citation type="journal article" date="2011" name="J. Bacteriol.">
        <title>Comparative genomics of 28 Salmonella enterica isolates: evidence for CRISPR-mediated adaptive sublineage evolution.</title>
        <authorList>
            <person name="Fricke W.F."/>
            <person name="Mammel M.K."/>
            <person name="McDermott P.F."/>
            <person name="Tartera C."/>
            <person name="White D.G."/>
            <person name="Leclerc J.E."/>
            <person name="Ravel J."/>
            <person name="Cebula T.A."/>
        </authorList>
    </citation>
    <scope>NUCLEOTIDE SEQUENCE [LARGE SCALE GENOMIC DNA]</scope>
    <source>
        <strain>SL254</strain>
    </source>
</reference>
<organism>
    <name type="scientific">Salmonella newport (strain SL254)</name>
    <dbReference type="NCBI Taxonomy" id="423368"/>
    <lineage>
        <taxon>Bacteria</taxon>
        <taxon>Pseudomonadati</taxon>
        <taxon>Pseudomonadota</taxon>
        <taxon>Gammaproteobacteria</taxon>
        <taxon>Enterobacterales</taxon>
        <taxon>Enterobacteriaceae</taxon>
        <taxon>Salmonella</taxon>
    </lineage>
</organism>
<feature type="chain" id="PRO_1000129942" description="Cell division protein FtsB">
    <location>
        <begin position="1"/>
        <end position="103"/>
    </location>
</feature>
<feature type="topological domain" description="Cytoplasmic" evidence="1">
    <location>
        <begin position="1"/>
        <end position="3"/>
    </location>
</feature>
<feature type="transmembrane region" description="Helical" evidence="1">
    <location>
        <begin position="4"/>
        <end position="21"/>
    </location>
</feature>
<feature type="topological domain" description="Periplasmic" evidence="1">
    <location>
        <begin position="22"/>
        <end position="103"/>
    </location>
</feature>
<feature type="coiled-coil region" evidence="1">
    <location>
        <begin position="33"/>
        <end position="62"/>
    </location>
</feature>
<keyword id="KW-0131">Cell cycle</keyword>
<keyword id="KW-0132">Cell division</keyword>
<keyword id="KW-0997">Cell inner membrane</keyword>
<keyword id="KW-1003">Cell membrane</keyword>
<keyword id="KW-0175">Coiled coil</keyword>
<keyword id="KW-0472">Membrane</keyword>
<keyword id="KW-0812">Transmembrane</keyword>
<keyword id="KW-1133">Transmembrane helix</keyword>
<sequence>MGKLTLLLLALLVWLQYSLWFGKNGIHDYSRVNDDVVAQQATNAKLKARNDQLFAEIDDLNGGQEAIEERARNELSMTKPGETFYRLVPDASKRAATAGQTHR</sequence>
<proteinExistence type="inferred from homology"/>
<comment type="function">
    <text evidence="1">Essential cell division protein. May link together the upstream cell division proteins, which are predominantly cytoplasmic, with the downstream cell division proteins, which are predominantly periplasmic.</text>
</comment>
<comment type="subunit">
    <text evidence="1">Part of a complex composed of FtsB, FtsL and FtsQ.</text>
</comment>
<comment type="subcellular location">
    <subcellularLocation>
        <location evidence="1">Cell inner membrane</location>
        <topology evidence="1">Single-pass type II membrane protein</topology>
    </subcellularLocation>
    <text evidence="1">Localizes to the division septum.</text>
</comment>
<comment type="similarity">
    <text evidence="1">Belongs to the FtsB family.</text>
</comment>
<accession>B4T458</accession>
<protein>
    <recommendedName>
        <fullName evidence="1">Cell division protein FtsB</fullName>
    </recommendedName>
</protein>
<evidence type="ECO:0000255" key="1">
    <source>
        <dbReference type="HAMAP-Rule" id="MF_00599"/>
    </source>
</evidence>
<name>FTSB_SALNS</name>
<gene>
    <name evidence="1" type="primary">ftsB</name>
    <name type="ordered locus">SNSL254_A3137</name>
</gene>